<reference key="1">
    <citation type="submission" date="2006-06" db="EMBL/GenBank/DDBJ databases">
        <title>Complete sequence of chromosome of Mycobacterium sp. MCS.</title>
        <authorList>
            <consortium name="US DOE Joint Genome Institute"/>
            <person name="Copeland A."/>
            <person name="Lucas S."/>
            <person name="Lapidus A."/>
            <person name="Barry K."/>
            <person name="Detter J.C."/>
            <person name="Glavina del Rio T."/>
            <person name="Hammon N."/>
            <person name="Israni S."/>
            <person name="Dalin E."/>
            <person name="Tice H."/>
            <person name="Pitluck S."/>
            <person name="Martinez M."/>
            <person name="Schmutz J."/>
            <person name="Larimer F."/>
            <person name="Land M."/>
            <person name="Hauser L."/>
            <person name="Kyrpides N."/>
            <person name="Kim E."/>
            <person name="Miller C.D."/>
            <person name="Hughes J.E."/>
            <person name="Anderson A.J."/>
            <person name="Sims R.C."/>
            <person name="Richardson P."/>
        </authorList>
    </citation>
    <scope>NUCLEOTIDE SEQUENCE [LARGE SCALE GENOMIC DNA]</scope>
    <source>
        <strain>MCS</strain>
    </source>
</reference>
<comment type="function">
    <text evidence="1">The RuvA-RuvB-RuvC complex processes Holliday junction (HJ) DNA during genetic recombination and DNA repair. Endonuclease that resolves HJ intermediates. Cleaves cruciform DNA by making single-stranded nicks across the HJ at symmetrical positions within the homologous arms, yielding a 5'-phosphate and a 3'-hydroxyl group; requires a central core of homology in the junction. The consensus cleavage sequence is 5'-(A/T)TT(C/G)-3'. Cleavage occurs on the 3'-side of the TT dinucleotide at the point of strand exchange. HJ branch migration catalyzed by RuvA-RuvB allows RuvC to scan DNA until it finds its consensus sequence, where it cleaves and resolves the cruciform DNA.</text>
</comment>
<comment type="catalytic activity">
    <reaction evidence="1">
        <text>Endonucleolytic cleavage at a junction such as a reciprocal single-stranded crossover between two homologous DNA duplexes (Holliday junction).</text>
        <dbReference type="EC" id="3.1.21.10"/>
    </reaction>
</comment>
<comment type="cofactor">
    <cofactor evidence="1">
        <name>Mg(2+)</name>
        <dbReference type="ChEBI" id="CHEBI:18420"/>
    </cofactor>
    <text evidence="1">Binds 2 Mg(2+) ion per subunit.</text>
</comment>
<comment type="subunit">
    <text evidence="1">Homodimer which binds Holliday junction (HJ) DNA. The HJ becomes 2-fold symmetrical on binding to RuvC with unstacked arms; it has a different conformation from HJ DNA in complex with RuvA. In the full resolvosome a probable DNA-RuvA(4)-RuvB(12)-RuvC(2) complex forms which resolves the HJ.</text>
</comment>
<comment type="subcellular location">
    <subcellularLocation>
        <location evidence="1">Cytoplasm</location>
    </subcellularLocation>
</comment>
<comment type="similarity">
    <text evidence="1">Belongs to the RuvC family.</text>
</comment>
<comment type="sequence caution" evidence="2">
    <conflict type="erroneous initiation">
        <sequence resource="EMBL-CDS" id="ABG08373"/>
    </conflict>
    <text>Extended N-terminus.</text>
</comment>
<proteinExistence type="inferred from homology"/>
<keyword id="KW-0963">Cytoplasm</keyword>
<keyword id="KW-0227">DNA damage</keyword>
<keyword id="KW-0233">DNA recombination</keyword>
<keyword id="KW-0234">DNA repair</keyword>
<keyword id="KW-0238">DNA-binding</keyword>
<keyword id="KW-0255">Endonuclease</keyword>
<keyword id="KW-0378">Hydrolase</keyword>
<keyword id="KW-0460">Magnesium</keyword>
<keyword id="KW-0479">Metal-binding</keyword>
<keyword id="KW-0540">Nuclease</keyword>
<evidence type="ECO:0000255" key="1">
    <source>
        <dbReference type="HAMAP-Rule" id="MF_00034"/>
    </source>
</evidence>
<evidence type="ECO:0000305" key="2"/>
<name>RUVC_MYCSS</name>
<feature type="chain" id="PRO_0000332430" description="Crossover junction endodeoxyribonuclease RuvC">
    <location>
        <begin position="1"/>
        <end position="185"/>
    </location>
</feature>
<feature type="active site" evidence="1">
    <location>
        <position position="7"/>
    </location>
</feature>
<feature type="active site" evidence="1">
    <location>
        <position position="68"/>
    </location>
</feature>
<feature type="active site" evidence="1">
    <location>
        <position position="141"/>
    </location>
</feature>
<feature type="binding site" evidence="1">
    <location>
        <position position="7"/>
    </location>
    <ligand>
        <name>Mg(2+)</name>
        <dbReference type="ChEBI" id="CHEBI:18420"/>
        <label>1</label>
    </ligand>
</feature>
<feature type="binding site" evidence="1">
    <location>
        <position position="68"/>
    </location>
    <ligand>
        <name>Mg(2+)</name>
        <dbReference type="ChEBI" id="CHEBI:18420"/>
        <label>2</label>
    </ligand>
</feature>
<feature type="binding site" evidence="1">
    <location>
        <position position="141"/>
    </location>
    <ligand>
        <name>Mg(2+)</name>
        <dbReference type="ChEBI" id="CHEBI:18420"/>
        <label>1</label>
    </ligand>
</feature>
<accession>Q1B9R1</accession>
<organism>
    <name type="scientific">Mycobacterium sp. (strain MCS)</name>
    <dbReference type="NCBI Taxonomy" id="164756"/>
    <lineage>
        <taxon>Bacteria</taxon>
        <taxon>Bacillati</taxon>
        <taxon>Actinomycetota</taxon>
        <taxon>Actinomycetes</taxon>
        <taxon>Mycobacteriales</taxon>
        <taxon>Mycobacteriaceae</taxon>
        <taxon>Mycobacterium</taxon>
    </lineage>
</organism>
<gene>
    <name evidence="1" type="primary">ruvC</name>
    <name type="ordered locus">Mmcs_2265</name>
</gene>
<protein>
    <recommendedName>
        <fullName evidence="1">Crossover junction endodeoxyribonuclease RuvC</fullName>
        <ecNumber evidence="1">3.1.21.10</ecNumber>
    </recommendedName>
    <alternativeName>
        <fullName evidence="1">Holliday junction nuclease RuvC</fullName>
    </alternativeName>
    <alternativeName>
        <fullName evidence="1">Holliday junction resolvase RuvC</fullName>
    </alternativeName>
</protein>
<sequence>MRVMGVDPGLTRCGLSVIESGQGRKVIALDVDVVRTPADEQLHRRLLIISDTVEHWMDTHRPDVIAIERVFANHNANTAMGTAQAGGVIALAAAKRDIDVHFHTPSEVKAAVTGNGRADKAQVTEMVTRILALQAKPTPADAADALALAICHCWRAPMIARMAAAEAMAAEARRKYQAKLKAARA</sequence>
<dbReference type="EC" id="3.1.21.10" evidence="1"/>
<dbReference type="EMBL" id="CP000384">
    <property type="protein sequence ID" value="ABG08373.1"/>
    <property type="status" value="ALT_INIT"/>
    <property type="molecule type" value="Genomic_DNA"/>
</dbReference>
<dbReference type="SMR" id="Q1B9R1"/>
<dbReference type="KEGG" id="mmc:Mmcs_2265"/>
<dbReference type="HOGENOM" id="CLU_091257_0_2_11"/>
<dbReference type="BioCyc" id="MSP164756:G1G6O-2317-MONOMER"/>
<dbReference type="GO" id="GO:0005737">
    <property type="term" value="C:cytoplasm"/>
    <property type="evidence" value="ECO:0007669"/>
    <property type="project" value="UniProtKB-SubCell"/>
</dbReference>
<dbReference type="GO" id="GO:0048476">
    <property type="term" value="C:Holliday junction resolvase complex"/>
    <property type="evidence" value="ECO:0007669"/>
    <property type="project" value="UniProtKB-UniRule"/>
</dbReference>
<dbReference type="GO" id="GO:0008821">
    <property type="term" value="F:crossover junction DNA endonuclease activity"/>
    <property type="evidence" value="ECO:0007669"/>
    <property type="project" value="UniProtKB-UniRule"/>
</dbReference>
<dbReference type="GO" id="GO:0003677">
    <property type="term" value="F:DNA binding"/>
    <property type="evidence" value="ECO:0007669"/>
    <property type="project" value="UniProtKB-KW"/>
</dbReference>
<dbReference type="GO" id="GO:0000287">
    <property type="term" value="F:magnesium ion binding"/>
    <property type="evidence" value="ECO:0007669"/>
    <property type="project" value="UniProtKB-UniRule"/>
</dbReference>
<dbReference type="GO" id="GO:0006310">
    <property type="term" value="P:DNA recombination"/>
    <property type="evidence" value="ECO:0007669"/>
    <property type="project" value="UniProtKB-UniRule"/>
</dbReference>
<dbReference type="GO" id="GO:0006281">
    <property type="term" value="P:DNA repair"/>
    <property type="evidence" value="ECO:0007669"/>
    <property type="project" value="UniProtKB-UniRule"/>
</dbReference>
<dbReference type="CDD" id="cd16962">
    <property type="entry name" value="RuvC"/>
    <property type="match status" value="1"/>
</dbReference>
<dbReference type="FunFam" id="3.30.420.10:FF:000002">
    <property type="entry name" value="Crossover junction endodeoxyribonuclease RuvC"/>
    <property type="match status" value="1"/>
</dbReference>
<dbReference type="Gene3D" id="3.30.420.10">
    <property type="entry name" value="Ribonuclease H-like superfamily/Ribonuclease H"/>
    <property type="match status" value="1"/>
</dbReference>
<dbReference type="HAMAP" id="MF_00034">
    <property type="entry name" value="RuvC"/>
    <property type="match status" value="1"/>
</dbReference>
<dbReference type="InterPro" id="IPR012337">
    <property type="entry name" value="RNaseH-like_sf"/>
</dbReference>
<dbReference type="InterPro" id="IPR036397">
    <property type="entry name" value="RNaseH_sf"/>
</dbReference>
<dbReference type="InterPro" id="IPR020563">
    <property type="entry name" value="X-over_junc_endoDNase_Mg_BS"/>
</dbReference>
<dbReference type="InterPro" id="IPR002176">
    <property type="entry name" value="X-over_junc_endoDNase_RuvC"/>
</dbReference>
<dbReference type="NCBIfam" id="NF000711">
    <property type="entry name" value="PRK00039.2-1"/>
    <property type="match status" value="1"/>
</dbReference>
<dbReference type="NCBIfam" id="TIGR00228">
    <property type="entry name" value="ruvC"/>
    <property type="match status" value="1"/>
</dbReference>
<dbReference type="PANTHER" id="PTHR30194">
    <property type="entry name" value="CROSSOVER JUNCTION ENDODEOXYRIBONUCLEASE RUVC"/>
    <property type="match status" value="1"/>
</dbReference>
<dbReference type="PANTHER" id="PTHR30194:SF3">
    <property type="entry name" value="CROSSOVER JUNCTION ENDODEOXYRIBONUCLEASE RUVC"/>
    <property type="match status" value="1"/>
</dbReference>
<dbReference type="Pfam" id="PF02075">
    <property type="entry name" value="RuvC"/>
    <property type="match status" value="1"/>
</dbReference>
<dbReference type="PRINTS" id="PR00696">
    <property type="entry name" value="RSOLVASERUVC"/>
</dbReference>
<dbReference type="SUPFAM" id="SSF53098">
    <property type="entry name" value="Ribonuclease H-like"/>
    <property type="match status" value="1"/>
</dbReference>
<dbReference type="PROSITE" id="PS01321">
    <property type="entry name" value="RUVC"/>
    <property type="match status" value="1"/>
</dbReference>